<name>HSS1_SENVU</name>
<organism>
    <name type="scientific">Senecio vulgaris</name>
    <name type="common">Common groundsel</name>
    <dbReference type="NCBI Taxonomy" id="76276"/>
    <lineage>
        <taxon>Eukaryota</taxon>
        <taxon>Viridiplantae</taxon>
        <taxon>Streptophyta</taxon>
        <taxon>Embryophyta</taxon>
        <taxon>Tracheophyta</taxon>
        <taxon>Spermatophyta</taxon>
        <taxon>Magnoliopsida</taxon>
        <taxon>eudicotyledons</taxon>
        <taxon>Gunneridae</taxon>
        <taxon>Pentapetalae</taxon>
        <taxon>asterids</taxon>
        <taxon>campanulids</taxon>
        <taxon>Asterales</taxon>
        <taxon>Asteraceae</taxon>
        <taxon>Asteroideae</taxon>
        <taxon>Senecioneae</taxon>
        <taxon>Senecioninae</taxon>
        <taxon>Senecio</taxon>
    </lineage>
</organism>
<protein>
    <recommendedName>
        <fullName>Homospermidine synthase</fullName>
        <ecNumber>2.5.1.45</ecNumber>
    </recommendedName>
</protein>
<gene>
    <name type="primary">HSS1</name>
</gene>
<keyword id="KW-0903">Direct protein sequencing</keyword>
<keyword id="KW-0520">NAD</keyword>
<keyword id="KW-0808">Transferase</keyword>
<reference key="1">
    <citation type="journal article" date="1999" name="Plant J.">
        <title>Cloning and expression of a cDNA encoding homospermidine synthase from Senecio vulgaris (Asteraceae) in Escherichia coli.</title>
        <authorList>
            <person name="Kaiser A.E."/>
        </authorList>
    </citation>
    <scope>NUCLEOTIDE SEQUENCE [MRNA]</scope>
    <scope>PROTEIN SEQUENCE OF 7-17; 149-159; 211-224 AND 278-289</scope>
</reference>
<reference key="2">
    <citation type="journal article" date="2000" name="Phytochemistry">
        <title>Cloning and expression of homospermidine synthase from Senecio vulgaris: a revision.</title>
        <authorList>
            <person name="Ober D."/>
            <person name="Harms R."/>
            <person name="Hartmann T."/>
        </authorList>
    </citation>
    <scope>NUCLEOTIDE SEQUENCE [MRNA]</scope>
    <scope>SEQUENCE REVISION</scope>
    <source>
        <tissue>Root</tissue>
    </source>
</reference>
<evidence type="ECO:0000305" key="1"/>
<accession>Q9M4B0</accession>
<accession>Q9ST60</accession>
<dbReference type="EC" id="2.5.1.45"/>
<dbReference type="EMBL" id="AJ010120">
    <property type="protein sequence ID" value="CAB52544.1"/>
    <property type="status" value="ALT_SEQ"/>
    <property type="molecule type" value="mRNA"/>
</dbReference>
<dbReference type="EMBL" id="AJ251500">
    <property type="protein sequence ID" value="CAB66389.1"/>
    <property type="molecule type" value="mRNA"/>
</dbReference>
<dbReference type="SMR" id="Q9M4B0"/>
<dbReference type="BioCyc" id="MetaCyc:MONOMER-13925"/>
<dbReference type="BRENDA" id="2.5.1.45">
    <property type="organism ID" value="5676"/>
</dbReference>
<dbReference type="UniPathway" id="UPA00329"/>
<dbReference type="GO" id="GO:0005737">
    <property type="term" value="C:cytoplasm"/>
    <property type="evidence" value="ECO:0007669"/>
    <property type="project" value="TreeGrafter"/>
</dbReference>
<dbReference type="GO" id="GO:0034038">
    <property type="term" value="F:deoxyhypusine synthase activity"/>
    <property type="evidence" value="ECO:0007669"/>
    <property type="project" value="TreeGrafter"/>
</dbReference>
<dbReference type="GO" id="GO:0050514">
    <property type="term" value="F:homospermidine synthase (spermidine-specific) activity"/>
    <property type="evidence" value="ECO:0007669"/>
    <property type="project" value="UniProtKB-EC"/>
</dbReference>
<dbReference type="FunFam" id="3.40.910.10:FF:000002">
    <property type="entry name" value="Deoxyhypusine synthase"/>
    <property type="match status" value="1"/>
</dbReference>
<dbReference type="Gene3D" id="3.40.910.10">
    <property type="entry name" value="Deoxyhypusine synthase"/>
    <property type="match status" value="1"/>
</dbReference>
<dbReference type="InterPro" id="IPR002773">
    <property type="entry name" value="Deoxyhypusine_synthase"/>
</dbReference>
<dbReference type="InterPro" id="IPR036982">
    <property type="entry name" value="Deoxyhypusine_synthase_sf"/>
</dbReference>
<dbReference type="InterPro" id="IPR029035">
    <property type="entry name" value="DHS-like_NAD/FAD-binding_dom"/>
</dbReference>
<dbReference type="NCBIfam" id="TIGR00321">
    <property type="entry name" value="dhys"/>
    <property type="match status" value="1"/>
</dbReference>
<dbReference type="PANTHER" id="PTHR11703">
    <property type="entry name" value="DEOXYHYPUSINE SYNTHASE"/>
    <property type="match status" value="1"/>
</dbReference>
<dbReference type="PANTHER" id="PTHR11703:SF0">
    <property type="entry name" value="DEOXYHYPUSINE SYNTHASE"/>
    <property type="match status" value="1"/>
</dbReference>
<dbReference type="Pfam" id="PF01916">
    <property type="entry name" value="DS"/>
    <property type="match status" value="1"/>
</dbReference>
<dbReference type="SUPFAM" id="SSF52467">
    <property type="entry name" value="DHS-like NAD/FAD-binding domain"/>
    <property type="match status" value="1"/>
</dbReference>
<sequence>MAESNKEAIDSARSNVFKESESLEGTCAKIGGYDFNNGIDHSKLLKSMVSTGFQASNLGDAMIITNQMLEWRLSHDEVPENCSEEEKKNRESVKCKIFLGFTSNLISSGVRETICYLTQHRMVDVLVTTTGGIEEDFIKCLASTYKGKFSLPGADLRSKGLNRIGNLIVPNDNYIKFEDWIIPIFDQMLIEQKTQNVLWTPSRMIARLGKEINNETSYLYWAYKNNIPVFCPSITDGSIGDMLYFHSVSNPGPGLVVDIVQDVIAMDNEAVHASPQKTGIIILGGGLPKHHICNANMMRNGADFAVFINTAQEYDGSDSGARPDEAVSWGKISSTGKAVKVHCDATIAFPLLVAETFAVKKEKASKVNGF</sequence>
<proteinExistence type="evidence at protein level"/>
<feature type="chain" id="PRO_0000134519" description="Homospermidine synthase">
    <location>
        <begin position="1"/>
        <end position="370"/>
    </location>
</feature>
<comment type="function">
    <text>Catalyzes the transfer of an aminobutyl unit from spermidine onto putrescine. The resulting polyamine homospermidine is a precursor in the biosynthesis of pyrrolizidine alkaloids.</text>
</comment>
<comment type="catalytic activity">
    <reaction>
        <text>putrescine + spermidine = sym-homospermidine + propane-1,3-diamine</text>
        <dbReference type="Rhea" id="RHEA:11236"/>
        <dbReference type="ChEBI" id="CHEBI:57484"/>
        <dbReference type="ChEBI" id="CHEBI:57811"/>
        <dbReference type="ChEBI" id="CHEBI:57834"/>
        <dbReference type="ChEBI" id="CHEBI:326268"/>
        <dbReference type="EC" id="2.5.1.45"/>
    </reaction>
</comment>
<comment type="cofactor">
    <cofactor>
        <name>NAD(+)</name>
        <dbReference type="ChEBI" id="CHEBI:57540"/>
    </cofactor>
</comment>
<comment type="pathway">
    <text>Alkaloid biosynthesis; pyrrolizidine alkaloid biosynthesis.</text>
</comment>
<comment type="subunit">
    <text>Homotetramer.</text>
</comment>
<comment type="similarity">
    <text evidence="1">Belongs to the deoxyhypusine synthase family.</text>
</comment>
<comment type="sequence caution" evidence="1">
    <conflict type="frameshift">
        <sequence resource="EMBL-CDS" id="CAB52544"/>
    </conflict>
</comment>
<comment type="sequence caution" evidence="1">
    <conflict type="miscellaneous discrepancy">
        <sequence resource="EMBL-CDS" id="CAB52544"/>
    </conflict>
    <text>Sequencing errors.</text>
</comment>